<comment type="function">
    <text evidence="2">Capable of inducing pigment dispersion in the chromatophores of the fiddler crab Uca pugilator.</text>
</comment>
<comment type="subcellular location">
    <subcellularLocation>
        <location>Secreted</location>
    </subcellularLocation>
</comment>
<comment type="similarity">
    <text evidence="3">Belongs to the arthropod PDH family.</text>
</comment>
<reference key="1">
    <citation type="submission" date="1996-01" db="EMBL/GenBank/DDBJ databases">
        <authorList>
            <person name="Davis D.C."/>
            <person name="Riehm J.P."/>
            <person name="Rao K.R."/>
            <person name="Keller R."/>
            <person name="Klein J.M."/>
        </authorList>
    </citation>
    <scope>NUCLEOTIDE SEQUENCE [MRNA]</scope>
    <source>
        <tissue>Brain</tissue>
    </source>
</reference>
<reference key="2">
    <citation type="journal article" date="1987" name="J. Biol. Chem.">
        <title>Primary structure of an analog of crustacean pigment-dispersing hormone from the lubber grasshopper Romalea microptera.</title>
        <authorList>
            <person name="Rao K.R."/>
            <person name="Mohrherr C.J."/>
            <person name="Riehm J.P."/>
            <person name="Zahnow C.A."/>
            <person name="Norton S."/>
            <person name="Johnson L."/>
            <person name="Tarr G.E."/>
        </authorList>
    </citation>
    <scope>PROTEIN SEQUENCE OF 69-86</scope>
    <scope>FUNCTION</scope>
    <scope>CHARACTERISTICS</scope>
    <scope>AMIDATION AT ALA-86</scope>
</reference>
<evidence type="ECO:0000255" key="1"/>
<evidence type="ECO:0000269" key="2">
    <source>
    </source>
</evidence>
<evidence type="ECO:0000305" key="3"/>
<protein>
    <recommendedName>
        <fullName>Pigment-dispersing hormone peptides</fullName>
    </recommendedName>
    <component>
        <recommendedName>
            <fullName>PDF precursor-related peptide</fullName>
        </recommendedName>
    </component>
    <component>
        <recommendedName>
            <fullName>Pigment-dispersing factor</fullName>
            <shortName>PDF</shortName>
        </recommendedName>
    </component>
</protein>
<name>PDH_ROMMI</name>
<feature type="signal peptide" evidence="1">
    <location>
        <begin position="1"/>
        <end position="22"/>
    </location>
</feature>
<feature type="peptide" id="PRO_0000023435" description="PDF precursor-related peptide">
    <location>
        <begin position="23"/>
        <end position="66"/>
    </location>
</feature>
<feature type="peptide" id="PRO_0000023436" description="Pigment-dispersing factor">
    <location>
        <begin position="69"/>
        <end position="86"/>
    </location>
</feature>
<feature type="modified residue" description="Alanine amide" evidence="2">
    <location>
        <position position="86"/>
    </location>
</feature>
<accession>P09929</accession>
<dbReference type="EMBL" id="U42472">
    <property type="protein sequence ID" value="AAA90959.1"/>
    <property type="molecule type" value="mRNA"/>
</dbReference>
<dbReference type="PIR" id="A29558">
    <property type="entry name" value="A29558"/>
</dbReference>
<dbReference type="SMR" id="P09929"/>
<dbReference type="GO" id="GO:0005576">
    <property type="term" value="C:extracellular region"/>
    <property type="evidence" value="ECO:0007669"/>
    <property type="project" value="UniProtKB-SubCell"/>
</dbReference>
<dbReference type="GO" id="GO:0005179">
    <property type="term" value="F:hormone activity"/>
    <property type="evidence" value="ECO:0007669"/>
    <property type="project" value="UniProtKB-KW"/>
</dbReference>
<dbReference type="GO" id="GO:0009416">
    <property type="term" value="P:response to light stimulus"/>
    <property type="evidence" value="ECO:0007669"/>
    <property type="project" value="InterPro"/>
</dbReference>
<dbReference type="InterPro" id="IPR009396">
    <property type="entry name" value="Pigment_DH"/>
</dbReference>
<dbReference type="Pfam" id="PF06324">
    <property type="entry name" value="Pigment_DH"/>
    <property type="match status" value="1"/>
</dbReference>
<keyword id="KW-0027">Amidation</keyword>
<keyword id="KW-0165">Cleavage on pair of basic residues</keyword>
<keyword id="KW-0903">Direct protein sequencing</keyword>
<keyword id="KW-0372">Hormone</keyword>
<keyword id="KW-0964">Secreted</keyword>
<keyword id="KW-0732">Signal</keyword>
<organism>
    <name type="scientific">Romalea microptera</name>
    <name type="common">Eastern lubber grasshopper</name>
    <name type="synonym">Romalea guttata</name>
    <dbReference type="NCBI Taxonomy" id="7007"/>
    <lineage>
        <taxon>Eukaryota</taxon>
        <taxon>Metazoa</taxon>
        <taxon>Ecdysozoa</taxon>
        <taxon>Arthropoda</taxon>
        <taxon>Hexapoda</taxon>
        <taxon>Insecta</taxon>
        <taxon>Pterygota</taxon>
        <taxon>Neoptera</taxon>
        <taxon>Polyneoptera</taxon>
        <taxon>Orthoptera</taxon>
        <taxon>Caelifera</taxon>
        <taxon>Acrididea</taxon>
        <taxon>Acridomorpha</taxon>
        <taxon>Acridoidea</taxon>
        <taxon>Romaleidae</taxon>
        <taxon>Romaleinae</taxon>
        <taxon>Romalea</taxon>
    </lineage>
</organism>
<sequence>MTAMAVSGKLLTALVLSTYILGLALTIQATQYEEDKYQENEVKYGRELASWLAQLAHKNEPAICAHKRNSEIINSLLGLPKLLNDAGRK</sequence>
<proteinExistence type="evidence at protein level"/>